<comment type="function">
    <text evidence="1">Binds to the 23S rRNA.</text>
</comment>
<comment type="subunit">
    <text evidence="1">Part of the 50S ribosomal subunit.</text>
</comment>
<comment type="similarity">
    <text evidence="1">Belongs to the universal ribosomal protein uL15 family.</text>
</comment>
<protein>
    <recommendedName>
        <fullName evidence="1">Large ribosomal subunit protein uL15</fullName>
    </recommendedName>
    <alternativeName>
        <fullName evidence="3">50S ribosomal protein L15</fullName>
    </alternativeName>
</protein>
<evidence type="ECO:0000255" key="1">
    <source>
        <dbReference type="HAMAP-Rule" id="MF_01341"/>
    </source>
</evidence>
<evidence type="ECO:0000256" key="2">
    <source>
        <dbReference type="SAM" id="MobiDB-lite"/>
    </source>
</evidence>
<evidence type="ECO:0000305" key="3"/>
<accession>Q8EUD1</accession>
<dbReference type="EMBL" id="BA000026">
    <property type="protein sequence ID" value="BAC44785.1"/>
    <property type="molecule type" value="Genomic_DNA"/>
</dbReference>
<dbReference type="RefSeq" id="WP_011077813.1">
    <property type="nucleotide sequence ID" value="NC_004432.1"/>
</dbReference>
<dbReference type="SMR" id="Q8EUD1"/>
<dbReference type="FunCoup" id="Q8EUD1">
    <property type="interactions" value="264"/>
</dbReference>
<dbReference type="STRING" id="272633.gene:10732119"/>
<dbReference type="KEGG" id="mpe:MYPE9990"/>
<dbReference type="eggNOG" id="COG0200">
    <property type="taxonomic scope" value="Bacteria"/>
</dbReference>
<dbReference type="HOGENOM" id="CLU_055188_4_2_14"/>
<dbReference type="InParanoid" id="Q8EUD1"/>
<dbReference type="Proteomes" id="UP000002522">
    <property type="component" value="Chromosome"/>
</dbReference>
<dbReference type="GO" id="GO:0022625">
    <property type="term" value="C:cytosolic large ribosomal subunit"/>
    <property type="evidence" value="ECO:0007669"/>
    <property type="project" value="TreeGrafter"/>
</dbReference>
<dbReference type="GO" id="GO:0019843">
    <property type="term" value="F:rRNA binding"/>
    <property type="evidence" value="ECO:0007669"/>
    <property type="project" value="UniProtKB-UniRule"/>
</dbReference>
<dbReference type="GO" id="GO:0003735">
    <property type="term" value="F:structural constituent of ribosome"/>
    <property type="evidence" value="ECO:0007669"/>
    <property type="project" value="InterPro"/>
</dbReference>
<dbReference type="GO" id="GO:0006412">
    <property type="term" value="P:translation"/>
    <property type="evidence" value="ECO:0007669"/>
    <property type="project" value="UniProtKB-UniRule"/>
</dbReference>
<dbReference type="Gene3D" id="3.100.10.10">
    <property type="match status" value="1"/>
</dbReference>
<dbReference type="HAMAP" id="MF_01341">
    <property type="entry name" value="Ribosomal_uL15"/>
    <property type="match status" value="1"/>
</dbReference>
<dbReference type="InterPro" id="IPR030878">
    <property type="entry name" value="Ribosomal_uL15"/>
</dbReference>
<dbReference type="InterPro" id="IPR021131">
    <property type="entry name" value="Ribosomal_uL15/eL18"/>
</dbReference>
<dbReference type="InterPro" id="IPR036227">
    <property type="entry name" value="Ribosomal_uL15/eL18_sf"/>
</dbReference>
<dbReference type="InterPro" id="IPR005749">
    <property type="entry name" value="Ribosomal_uL15_bac-type"/>
</dbReference>
<dbReference type="NCBIfam" id="TIGR01071">
    <property type="entry name" value="rplO_bact"/>
    <property type="match status" value="1"/>
</dbReference>
<dbReference type="PANTHER" id="PTHR12934">
    <property type="entry name" value="50S RIBOSOMAL PROTEIN L15"/>
    <property type="match status" value="1"/>
</dbReference>
<dbReference type="PANTHER" id="PTHR12934:SF11">
    <property type="entry name" value="LARGE RIBOSOMAL SUBUNIT PROTEIN UL15M"/>
    <property type="match status" value="1"/>
</dbReference>
<dbReference type="Pfam" id="PF00828">
    <property type="entry name" value="Ribosomal_L27A"/>
    <property type="match status" value="1"/>
</dbReference>
<dbReference type="SUPFAM" id="SSF52080">
    <property type="entry name" value="Ribosomal proteins L15p and L18e"/>
    <property type="match status" value="1"/>
</dbReference>
<feature type="chain" id="PRO_0000104764" description="Large ribosomal subunit protein uL15">
    <location>
        <begin position="1"/>
        <end position="147"/>
    </location>
</feature>
<feature type="region of interest" description="Disordered" evidence="2">
    <location>
        <begin position="1"/>
        <end position="54"/>
    </location>
</feature>
<feature type="compositionally biased region" description="Basic and acidic residues" evidence="2">
    <location>
        <begin position="1"/>
        <end position="13"/>
    </location>
</feature>
<feature type="compositionally biased region" description="Basic residues" evidence="2">
    <location>
        <begin position="36"/>
        <end position="45"/>
    </location>
</feature>
<sequence length="147" mass="16066">MKLENLKSKEGSRHKTKRVGRGFGSGIGKTSTRGSKGQKSRKSGHTRPGFEGGQTTLYRRIPKIGFNNKNFANNYNVVTLNNIVKLNLANVDKKVLVEKGLIEDNKLPIKVIGTATISKPISVSAHKFSKGSVATLEKSKSKFVVIK</sequence>
<gene>
    <name evidence="1" type="primary">rplO</name>
    <name type="ordered locus">MYPE9990</name>
</gene>
<reference key="1">
    <citation type="journal article" date="2002" name="Nucleic Acids Res.">
        <title>The complete genomic sequence of Mycoplasma penetrans, an intracellular bacterial pathogen in humans.</title>
        <authorList>
            <person name="Sasaki Y."/>
            <person name="Ishikawa J."/>
            <person name="Yamashita A."/>
            <person name="Oshima K."/>
            <person name="Kenri T."/>
            <person name="Furuya K."/>
            <person name="Yoshino C."/>
            <person name="Horino A."/>
            <person name="Shiba T."/>
            <person name="Sasaki T."/>
            <person name="Hattori M."/>
        </authorList>
    </citation>
    <scope>NUCLEOTIDE SEQUENCE [LARGE SCALE GENOMIC DNA]</scope>
    <source>
        <strain>HF-2</strain>
    </source>
</reference>
<keyword id="KW-1185">Reference proteome</keyword>
<keyword id="KW-0687">Ribonucleoprotein</keyword>
<keyword id="KW-0689">Ribosomal protein</keyword>
<keyword id="KW-0694">RNA-binding</keyword>
<keyword id="KW-0699">rRNA-binding</keyword>
<proteinExistence type="inferred from homology"/>
<organism>
    <name type="scientific">Malacoplasma penetrans (strain HF-2)</name>
    <name type="common">Mycoplasma penetrans</name>
    <dbReference type="NCBI Taxonomy" id="272633"/>
    <lineage>
        <taxon>Bacteria</taxon>
        <taxon>Bacillati</taxon>
        <taxon>Mycoplasmatota</taxon>
        <taxon>Mycoplasmoidales</taxon>
        <taxon>Mycoplasmoidaceae</taxon>
        <taxon>Malacoplasma</taxon>
    </lineage>
</organism>
<name>RL15_MALP2</name>